<reference key="1">
    <citation type="journal article" date="2002" name="Nat. Genet.">
        <title>Genome sequence of the endocellular obligate symbiont of tsetse flies, Wigglesworthia glossinidia.</title>
        <authorList>
            <person name="Akman L."/>
            <person name="Yamashita A."/>
            <person name="Watanabe H."/>
            <person name="Oshima K."/>
            <person name="Shiba T."/>
            <person name="Hattori M."/>
            <person name="Aksoy S."/>
        </authorList>
    </citation>
    <scope>NUCLEOTIDE SEQUENCE [LARGE SCALE GENOMIC DNA]</scope>
</reference>
<comment type="function">
    <text evidence="1">Binds to the 23S rRNA.</text>
</comment>
<comment type="similarity">
    <text evidence="1">Belongs to the bacterial ribosomal protein bL9 family.</text>
</comment>
<protein>
    <recommendedName>
        <fullName evidence="1">Large ribosomal subunit protein bL9</fullName>
    </recommendedName>
    <alternativeName>
        <fullName evidence="2">50S ribosomal protein L9</fullName>
    </alternativeName>
</protein>
<feature type="chain" id="PRO_0000176705" description="Large ribosomal subunit protein bL9">
    <location>
        <begin position="1"/>
        <end position="150"/>
    </location>
</feature>
<accession>Q8D2U4</accession>
<proteinExistence type="inferred from homology"/>
<sequence>MQIILLKKIINKGNIGDKIKVKAGYARNFLFPKKIAIIASEKNLKFFEKKRKILEEQSKYENFKLKERFRNIKSLKEIEIYCKAGSKGKLFGSIGANHIIEKIKERGIRIMKNEIKLTNGPLKTIGKHNIKIKVKSNMCTEICVILKNNI</sequence>
<dbReference type="EMBL" id="BA000021">
    <property type="protein sequence ID" value="BAC24406.1"/>
    <property type="molecule type" value="Genomic_DNA"/>
</dbReference>
<dbReference type="SMR" id="Q8D2U4"/>
<dbReference type="STRING" id="36870.gene:10368753"/>
<dbReference type="KEGG" id="wbr:rplI"/>
<dbReference type="eggNOG" id="COG0359">
    <property type="taxonomic scope" value="Bacteria"/>
</dbReference>
<dbReference type="HOGENOM" id="CLU_078938_4_1_6"/>
<dbReference type="OrthoDB" id="9788336at2"/>
<dbReference type="Proteomes" id="UP000000562">
    <property type="component" value="Chromosome"/>
</dbReference>
<dbReference type="GO" id="GO:1990904">
    <property type="term" value="C:ribonucleoprotein complex"/>
    <property type="evidence" value="ECO:0007669"/>
    <property type="project" value="UniProtKB-KW"/>
</dbReference>
<dbReference type="GO" id="GO:0005840">
    <property type="term" value="C:ribosome"/>
    <property type="evidence" value="ECO:0007669"/>
    <property type="project" value="UniProtKB-KW"/>
</dbReference>
<dbReference type="GO" id="GO:0019843">
    <property type="term" value="F:rRNA binding"/>
    <property type="evidence" value="ECO:0007669"/>
    <property type="project" value="UniProtKB-UniRule"/>
</dbReference>
<dbReference type="GO" id="GO:0003735">
    <property type="term" value="F:structural constituent of ribosome"/>
    <property type="evidence" value="ECO:0007669"/>
    <property type="project" value="InterPro"/>
</dbReference>
<dbReference type="GO" id="GO:0006412">
    <property type="term" value="P:translation"/>
    <property type="evidence" value="ECO:0007669"/>
    <property type="project" value="UniProtKB-UniRule"/>
</dbReference>
<dbReference type="Gene3D" id="3.10.430.100">
    <property type="entry name" value="Ribosomal protein L9, C-terminal domain"/>
    <property type="match status" value="1"/>
</dbReference>
<dbReference type="Gene3D" id="3.40.5.10">
    <property type="entry name" value="Ribosomal protein L9, N-terminal domain"/>
    <property type="match status" value="1"/>
</dbReference>
<dbReference type="HAMAP" id="MF_00503">
    <property type="entry name" value="Ribosomal_bL9"/>
    <property type="match status" value="1"/>
</dbReference>
<dbReference type="InterPro" id="IPR000244">
    <property type="entry name" value="Ribosomal_bL9"/>
</dbReference>
<dbReference type="InterPro" id="IPR009027">
    <property type="entry name" value="Ribosomal_bL9/RNase_H1_N"/>
</dbReference>
<dbReference type="InterPro" id="IPR020594">
    <property type="entry name" value="Ribosomal_bL9_bac/chp"/>
</dbReference>
<dbReference type="InterPro" id="IPR020069">
    <property type="entry name" value="Ribosomal_bL9_C"/>
</dbReference>
<dbReference type="InterPro" id="IPR036791">
    <property type="entry name" value="Ribosomal_bL9_C_sf"/>
</dbReference>
<dbReference type="InterPro" id="IPR020070">
    <property type="entry name" value="Ribosomal_bL9_N"/>
</dbReference>
<dbReference type="InterPro" id="IPR036935">
    <property type="entry name" value="Ribosomal_bL9_N_sf"/>
</dbReference>
<dbReference type="NCBIfam" id="TIGR00158">
    <property type="entry name" value="L9"/>
    <property type="match status" value="1"/>
</dbReference>
<dbReference type="PANTHER" id="PTHR21368">
    <property type="entry name" value="50S RIBOSOMAL PROTEIN L9"/>
    <property type="match status" value="1"/>
</dbReference>
<dbReference type="Pfam" id="PF03948">
    <property type="entry name" value="Ribosomal_L9_C"/>
    <property type="match status" value="1"/>
</dbReference>
<dbReference type="Pfam" id="PF01281">
    <property type="entry name" value="Ribosomal_L9_N"/>
    <property type="match status" value="1"/>
</dbReference>
<dbReference type="SUPFAM" id="SSF55658">
    <property type="entry name" value="L9 N-domain-like"/>
    <property type="match status" value="1"/>
</dbReference>
<dbReference type="SUPFAM" id="SSF55653">
    <property type="entry name" value="Ribosomal protein L9 C-domain"/>
    <property type="match status" value="1"/>
</dbReference>
<dbReference type="PROSITE" id="PS00651">
    <property type="entry name" value="RIBOSOMAL_L9"/>
    <property type="match status" value="1"/>
</dbReference>
<gene>
    <name evidence="1" type="primary">rplI</name>
    <name type="ordered locus">WIGBR2600</name>
</gene>
<evidence type="ECO:0000255" key="1">
    <source>
        <dbReference type="HAMAP-Rule" id="MF_00503"/>
    </source>
</evidence>
<evidence type="ECO:0000305" key="2"/>
<name>RL9_WIGBR</name>
<organism>
    <name type="scientific">Wigglesworthia glossinidia brevipalpis</name>
    <dbReference type="NCBI Taxonomy" id="36870"/>
    <lineage>
        <taxon>Bacteria</taxon>
        <taxon>Pseudomonadati</taxon>
        <taxon>Pseudomonadota</taxon>
        <taxon>Gammaproteobacteria</taxon>
        <taxon>Enterobacterales</taxon>
        <taxon>Erwiniaceae</taxon>
        <taxon>Wigglesworthia</taxon>
    </lineage>
</organism>
<keyword id="KW-1185">Reference proteome</keyword>
<keyword id="KW-0687">Ribonucleoprotein</keyword>
<keyword id="KW-0689">Ribosomal protein</keyword>
<keyword id="KW-0694">RNA-binding</keyword>
<keyword id="KW-0699">rRNA-binding</keyword>